<keyword id="KW-0002">3D-structure</keyword>
<keyword id="KW-0007">Acetylation</keyword>
<keyword id="KW-0131">Cell cycle</keyword>
<keyword id="KW-0132">Cell division</keyword>
<keyword id="KW-0137">Centromere</keyword>
<keyword id="KW-0158">Chromosome</keyword>
<keyword id="KW-0159">Chromosome partition</keyword>
<keyword id="KW-0175">Coiled coil</keyword>
<keyword id="KW-0963">Cytoplasm</keyword>
<keyword id="KW-0206">Cytoskeleton</keyword>
<keyword id="KW-0995">Kinetochore</keyword>
<keyword id="KW-0493">Microtubule</keyword>
<keyword id="KW-0498">Mitosis</keyword>
<keyword id="KW-0539">Nucleus</keyword>
<keyword id="KW-1185">Reference proteome</keyword>
<dbReference type="EMBL" id="Z72583">
    <property type="protein sequence ID" value="CAA96764.1"/>
    <property type="molecule type" value="Genomic_DNA"/>
</dbReference>
<dbReference type="EMBL" id="AY558484">
    <property type="protein sequence ID" value="AAS56810.1"/>
    <property type="molecule type" value="Genomic_DNA"/>
</dbReference>
<dbReference type="EMBL" id="BK006941">
    <property type="protein sequence ID" value="DAA08041.1"/>
    <property type="molecule type" value="Genomic_DNA"/>
</dbReference>
<dbReference type="PIR" id="S64065">
    <property type="entry name" value="S64065"/>
</dbReference>
<dbReference type="RefSeq" id="NP_011454.1">
    <property type="nucleotide sequence ID" value="NM_001180926.1"/>
</dbReference>
<dbReference type="PDB" id="8Q84">
    <property type="method" value="EM"/>
    <property type="resolution" value="3.15 A"/>
    <property type="chains" value="J/V=1-247"/>
</dbReference>
<dbReference type="PDB" id="8Q85">
    <property type="method" value="EM"/>
    <property type="resolution" value="3.97 A"/>
    <property type="chains" value="V=1-247"/>
</dbReference>
<dbReference type="PDBsum" id="8Q84"/>
<dbReference type="PDBsum" id="8Q85"/>
<dbReference type="EMDB" id="EMD-18246"/>
<dbReference type="EMDB" id="EMD-18247"/>
<dbReference type="SMR" id="P53168"/>
<dbReference type="BioGRID" id="33186">
    <property type="interactions" value="446"/>
</dbReference>
<dbReference type="ComplexPortal" id="CPX-1041">
    <property type="entry name" value="DASH complex"/>
</dbReference>
<dbReference type="DIP" id="DIP-1287N"/>
<dbReference type="FunCoup" id="P53168">
    <property type="interactions" value="93"/>
</dbReference>
<dbReference type="IntAct" id="P53168">
    <property type="interactions" value="16"/>
</dbReference>
<dbReference type="MINT" id="P53168"/>
<dbReference type="STRING" id="4932.YGL061C"/>
<dbReference type="CarbonylDB" id="P53168"/>
<dbReference type="GlyGen" id="P53168">
    <property type="glycosylation" value="1 site, 1 O-linked glycan (1 site)"/>
</dbReference>
<dbReference type="iPTMnet" id="P53168"/>
<dbReference type="PaxDb" id="4932-YGL061C"/>
<dbReference type="PeptideAtlas" id="P53168"/>
<dbReference type="EnsemblFungi" id="YGL061C_mRNA">
    <property type="protein sequence ID" value="YGL061C"/>
    <property type="gene ID" value="YGL061C"/>
</dbReference>
<dbReference type="GeneID" id="852819"/>
<dbReference type="KEGG" id="sce:YGL061C"/>
<dbReference type="AGR" id="SGD:S000003029"/>
<dbReference type="SGD" id="S000003029">
    <property type="gene designation" value="DUO1"/>
</dbReference>
<dbReference type="VEuPathDB" id="FungiDB:YGL061C"/>
<dbReference type="eggNOG" id="ENOG502S4KM">
    <property type="taxonomic scope" value="Eukaryota"/>
</dbReference>
<dbReference type="HOGENOM" id="CLU_114619_0_0_1"/>
<dbReference type="InParanoid" id="P53168"/>
<dbReference type="OMA" id="DTWIKIQ"/>
<dbReference type="OrthoDB" id="4067138at2759"/>
<dbReference type="BioCyc" id="YEAST:G3O-30569-MONOMER"/>
<dbReference type="BioGRID-ORCS" id="852819">
    <property type="hits" value="1 hit in 10 CRISPR screens"/>
</dbReference>
<dbReference type="CD-CODE" id="876000F7">
    <property type="entry name" value="Centrosome"/>
</dbReference>
<dbReference type="PRO" id="PR:P53168"/>
<dbReference type="Proteomes" id="UP000002311">
    <property type="component" value="Chromosome VII"/>
</dbReference>
<dbReference type="RNAct" id="P53168">
    <property type="molecule type" value="protein"/>
</dbReference>
<dbReference type="GO" id="GO:0005737">
    <property type="term" value="C:cytoplasm"/>
    <property type="evidence" value="ECO:0007669"/>
    <property type="project" value="UniProtKB-KW"/>
</dbReference>
<dbReference type="GO" id="GO:0042729">
    <property type="term" value="C:DASH complex"/>
    <property type="evidence" value="ECO:0000314"/>
    <property type="project" value="SGD"/>
</dbReference>
<dbReference type="GO" id="GO:0005874">
    <property type="term" value="C:microtubule"/>
    <property type="evidence" value="ECO:0007669"/>
    <property type="project" value="UniProtKB-KW"/>
</dbReference>
<dbReference type="GO" id="GO:0072686">
    <property type="term" value="C:mitotic spindle"/>
    <property type="evidence" value="ECO:0000303"/>
    <property type="project" value="ComplexPortal"/>
</dbReference>
<dbReference type="GO" id="GO:0000922">
    <property type="term" value="C:spindle pole"/>
    <property type="evidence" value="ECO:0007669"/>
    <property type="project" value="UniProtKB-SubCell"/>
</dbReference>
<dbReference type="GO" id="GO:0008608">
    <property type="term" value="P:attachment of spindle microtubules to kinetochore"/>
    <property type="evidence" value="ECO:0000314"/>
    <property type="project" value="SGD"/>
</dbReference>
<dbReference type="GO" id="GO:0051301">
    <property type="term" value="P:cell division"/>
    <property type="evidence" value="ECO:0007669"/>
    <property type="project" value="UniProtKB-KW"/>
</dbReference>
<dbReference type="GO" id="GO:1990758">
    <property type="term" value="P:mitotic sister chromatid biorientation"/>
    <property type="evidence" value="ECO:0000314"/>
    <property type="project" value="ComplexPortal"/>
</dbReference>
<dbReference type="GO" id="GO:0051987">
    <property type="term" value="P:positive regulation of attachment of spindle microtubules to kinetochore"/>
    <property type="evidence" value="ECO:0000314"/>
    <property type="project" value="ComplexPortal"/>
</dbReference>
<dbReference type="GO" id="GO:0031116">
    <property type="term" value="P:positive regulation of microtubule polymerization"/>
    <property type="evidence" value="ECO:0000314"/>
    <property type="project" value="SGD"/>
</dbReference>
<dbReference type="GO" id="GO:1990976">
    <property type="term" value="P:protein transport along microtubule to mitotic spindle pole body"/>
    <property type="evidence" value="ECO:0000315"/>
    <property type="project" value="UniProtKB"/>
</dbReference>
<dbReference type="InterPro" id="IPR013960">
    <property type="entry name" value="DASH_Duo1"/>
</dbReference>
<dbReference type="PANTHER" id="PTHR28216">
    <property type="entry name" value="DASH COMPLEX SUBUNIT DUO1"/>
    <property type="match status" value="1"/>
</dbReference>
<dbReference type="PANTHER" id="PTHR28216:SF1">
    <property type="entry name" value="DASH COMPLEX SUBUNIT DUO1"/>
    <property type="match status" value="1"/>
</dbReference>
<dbReference type="Pfam" id="PF08651">
    <property type="entry name" value="DASH_Duo1"/>
    <property type="match status" value="1"/>
</dbReference>
<feature type="initiator methionine" description="Removed" evidence="20">
    <location>
        <position position="1"/>
    </location>
</feature>
<feature type="chain" id="PRO_0000215595" description="DASH complex subunit DUO1">
    <location>
        <begin position="2"/>
        <end position="247"/>
    </location>
</feature>
<feature type="region of interest" description="Disordered" evidence="3">
    <location>
        <begin position="27"/>
        <end position="47"/>
    </location>
</feature>
<feature type="region of interest" description="Disordered" evidence="3">
    <location>
        <begin position="172"/>
        <end position="247"/>
    </location>
</feature>
<feature type="coiled-coil region" evidence="2">
    <location>
        <begin position="152"/>
        <end position="180"/>
    </location>
</feature>
<feature type="compositionally biased region" description="Polar residues" evidence="3">
    <location>
        <begin position="232"/>
        <end position="247"/>
    </location>
</feature>
<feature type="modified residue" description="N-acetylserine" evidence="20">
    <location>
        <position position="2"/>
    </location>
</feature>
<feature type="mutagenesis site" description="In DUO1-1; produces abnormal spindles resulting in growth arrest at 37 degrees Celsius; when associated with V-157." evidence="18">
    <original>E</original>
    <variation>K</variation>
    <location>
        <position position="67"/>
    </location>
</feature>
<feature type="mutagenesis site" description="In DUO1-2; produces abnormal spindles resulting in growth arrest at 37 degrees Celsius; when associated with I-124." evidence="18">
    <original>A</original>
    <variation>T</variation>
    <location>
        <position position="117"/>
    </location>
</feature>
<feature type="mutagenesis site" description="In DUO1-2; produces abnormal spindles resulting in growth arrest at 37 degrees Celsius; when associated with T-117." evidence="18">
    <original>M</original>
    <variation>I</variation>
    <location>
        <position position="124"/>
    </location>
</feature>
<feature type="mutagenesis site" description="In DUO1-1; produces abnormal spindles resulting in growth arrest at 37 degrees Celsius; when associated with K-67." evidence="18">
    <original>A</original>
    <variation>V</variation>
    <location>
        <position position="157"/>
    </location>
</feature>
<comment type="function">
    <text evidence="5 8 9 10 12 13 14 15 16 17 18">Component of the DASH complex that connects microtubules with kinetochores and couples microtubule depolymerisation to chromosome movement; it is involved in retrieving kinetochores to the spindle poles before their re-orientation on the spindle in early mitosis and allows microtubule depolymerization to pull chromosomes apart and resist detachment during anaphase (PubMed:15664196, PubMed:16415853, PubMed:16777964, PubMed:17460120, PubMed:17643123). Kinetochores, consisting of a centromere-associated inner segment and a microtubule-contacting outer segment, play a crucial role in chromosome segregation by mediating the physical connection between centromeric DNA and microtubules (PubMed:15664196, PubMed:16415853, PubMed:16777964, PubMed:17460120). Kinetochores also serve as an input point for the spindle assembly checkpoint, which delays anaphase until all chromosomes have bioriented on the mitotic spindle (PubMed:12408861, PubMed:9817759). During spindle-kinetochore attachment, kinetochores first attach to the lateral surface of spindle microtubules, which supports the congression of chromosomes toward the middle of the dividing cell; they then slide along towards the spindle pole, a process independent of the DASH complex but requiring the NDC80 complex (PubMed:25236177). When the end of a disassembling microtubule reaches the laterally attached kinetochore, the DASH complex together with the NDC80 complex and STU2 convert lateral attachment to end-on capture to produce a structure that can track with microtubule shortening and sustain attachment when tension is applied across sister kinetochores upon their biorientation (PubMed:15640796, PubMed:15664196, PubMed:25236177). Microtubule depolymerization proceeds by protofilament splaying and induces the kinetochore-attached DASH complex to slide longitudinally, thereby helping to transduce depolymerization energy into pulling forces to disjoin chromatids (PubMed:16415853, PubMed:16777964). Incorrect microtubule attachments are corrected by releasing microubules from the kinetochore through phosphorylation by IPL1 of kinetochore components (PubMed:12408861). Links the microtubule cytoskeleton to chromosomes during interphase (PubMed:36701236). Also contributes to the poleward transport of kinetochores on microtubules following centromeric DNA replication in S-phase (PubMed:18079178).</text>
</comment>
<comment type="subunit">
    <text evidence="1 4 8 11 13 14 16">Component of the DASH complex consisting of ASK1, DAD1, DAD2, DAD3, DAD4, DAM1, DUO1, HSK3, SPC19 and SPC34, with a stoichiometry of one copy of each subunit per complex (PubMed:11782438, PubMed:15640796, PubMed:16715078, PubMed:17460120, PubMed:17643123, PubMed:25236177). Multiple DASH complexes oligomerize to form a ring that encircles spindle microtubules and organizes the rod-like NDC80 complexes of the outer kinetochore (PubMed:16715078, PubMed:17460120, PubMed:17643123, PubMed:25236177). DASH complex oligomerization strengthens microtubule attachments (PubMed:25236177). On cytoplasmic microtubules, DASH complexes appear to form patches instead of rings (By similarity). Within the complex, DAM1 and DUO1 may form the microtubule connections (PubMed:17460120).</text>
</comment>
<comment type="interaction">
    <interactant intactId="EBI-23800">
        <id>P53168</id>
    </interactant>
    <interactant intactId="EBI-35662">
        <id>Q12248</id>
        <label>DAD1</label>
    </interactant>
    <organismsDiffer>false</organismsDiffer>
    <experiments>4</experiments>
</comment>
<comment type="interaction">
    <interactant intactId="EBI-23800">
        <id>P53168</id>
    </interactant>
    <interactant intactId="EBI-23268">
        <id>P53267</id>
        <label>DAM1</label>
    </interactant>
    <organismsDiffer>false</organismsDiffer>
    <experiments>7</experiments>
</comment>
<comment type="interaction">
    <interactant intactId="EBI-23800">
        <id>P53168</id>
    </interactant>
    <interactant intactId="EBI-26401">
        <id>P36131</id>
        <label>SPC34</label>
    </interactant>
    <organismsDiffer>false</organismsDiffer>
    <experiments>3</experiments>
</comment>
<comment type="subcellular location">
    <subcellularLocation>
        <location evidence="6 18">Nucleus</location>
    </subcellularLocation>
    <subcellularLocation>
        <location evidence="6 18">Cytoplasm</location>
        <location evidence="6 18">Cytoskeleton</location>
        <location evidence="6 18">Spindle pole</location>
    </subcellularLocation>
    <subcellularLocation>
        <location evidence="4 18">Chromosome</location>
        <location evidence="4 18">Centromere</location>
        <location evidence="4 18">Kinetochore</location>
    </subcellularLocation>
    <text evidence="18">Associates with the mitotic spindle and the kinetochore.</text>
</comment>
<comment type="miscellaneous">
    <text evidence="7">Present with 996 molecules/cell in log phase SD medium.</text>
</comment>
<comment type="similarity">
    <text evidence="19">Belongs to the DASH complex DUO1 family.</text>
</comment>
<organism>
    <name type="scientific">Saccharomyces cerevisiae (strain ATCC 204508 / S288c)</name>
    <name type="common">Baker's yeast</name>
    <dbReference type="NCBI Taxonomy" id="559292"/>
    <lineage>
        <taxon>Eukaryota</taxon>
        <taxon>Fungi</taxon>
        <taxon>Dikarya</taxon>
        <taxon>Ascomycota</taxon>
        <taxon>Saccharomycotina</taxon>
        <taxon>Saccharomycetes</taxon>
        <taxon>Saccharomycetales</taxon>
        <taxon>Saccharomycetaceae</taxon>
        <taxon>Saccharomyces</taxon>
    </lineage>
</organism>
<proteinExistence type="evidence at protein level"/>
<accession>P53168</accession>
<accession>D6VU80</accession>
<gene>
    <name type="primary">DUO1</name>
    <name type="ordered locus">YGL061C</name>
</gene>
<sequence length="247" mass="27473">MSEQSQLDDSTIDKLIPQIFNEMRSNLNNTTNKFPKSTGGGASDNISANSNSIRSFNSITTQSLLKESESLDKITAMIKNVTAALKNNLPVYVNQVHEVCKSTNSILDSWINIHSQAGYIHKLMSDQTYLKLINDRLHNENVNTNDEDGSTLHNVIALKKKEILDLRQKLENRKGEKDAAPAKPPNQGLNPRYGVQSGRRPVPSAGISNNGRVRKTHVPASKRPSGIPRVTNRWTKPTASSSRKMFR</sequence>
<reference key="1">
    <citation type="journal article" date="1997" name="Yeast">
        <title>The characterization of two new clusters of duplicated genes suggests a 'Lego' organization of the yeast Saccharomyces cerevisiae chromosomes.</title>
        <authorList>
            <person name="Feuermann M."/>
            <person name="de Montigny J."/>
            <person name="Potier S."/>
            <person name="Souciet J.-L."/>
        </authorList>
    </citation>
    <scope>NUCLEOTIDE SEQUENCE [GENOMIC DNA]</scope>
    <source>
        <strain>ATCC 204508 / S288c</strain>
    </source>
</reference>
<reference key="2">
    <citation type="journal article" date="1997" name="Nature">
        <title>The nucleotide sequence of Saccharomyces cerevisiae chromosome VII.</title>
        <authorList>
            <person name="Tettelin H."/>
            <person name="Agostoni-Carbone M.L."/>
            <person name="Albermann K."/>
            <person name="Albers M."/>
            <person name="Arroyo J."/>
            <person name="Backes U."/>
            <person name="Barreiros T."/>
            <person name="Bertani I."/>
            <person name="Bjourson A.J."/>
            <person name="Brueckner M."/>
            <person name="Bruschi C.V."/>
            <person name="Carignani G."/>
            <person name="Castagnoli L."/>
            <person name="Cerdan E."/>
            <person name="Clemente M.L."/>
            <person name="Coblenz A."/>
            <person name="Coglievina M."/>
            <person name="Coissac E."/>
            <person name="Defoor E."/>
            <person name="Del Bino S."/>
            <person name="Delius H."/>
            <person name="Delneri D."/>
            <person name="de Wergifosse P."/>
            <person name="Dujon B."/>
            <person name="Durand P."/>
            <person name="Entian K.-D."/>
            <person name="Eraso P."/>
            <person name="Escribano V."/>
            <person name="Fabiani L."/>
            <person name="Fartmann B."/>
            <person name="Feroli F."/>
            <person name="Feuermann M."/>
            <person name="Frontali L."/>
            <person name="Garcia-Gonzalez M."/>
            <person name="Garcia-Saez M.I."/>
            <person name="Goffeau A."/>
            <person name="Guerreiro P."/>
            <person name="Hani J."/>
            <person name="Hansen M."/>
            <person name="Hebling U."/>
            <person name="Hernandez K."/>
            <person name="Heumann K."/>
            <person name="Hilger F."/>
            <person name="Hofmann B."/>
            <person name="Indge K.J."/>
            <person name="James C.M."/>
            <person name="Klima R."/>
            <person name="Koetter P."/>
            <person name="Kramer B."/>
            <person name="Kramer W."/>
            <person name="Lauquin G."/>
            <person name="Leuther H."/>
            <person name="Louis E.J."/>
            <person name="Maillier E."/>
            <person name="Marconi A."/>
            <person name="Martegani E."/>
            <person name="Mazon M.J."/>
            <person name="Mazzoni C."/>
            <person name="McReynolds A.D.K."/>
            <person name="Melchioretto P."/>
            <person name="Mewes H.-W."/>
            <person name="Minenkova O."/>
            <person name="Mueller-Auer S."/>
            <person name="Nawrocki A."/>
            <person name="Netter P."/>
            <person name="Neu R."/>
            <person name="Nombela C."/>
            <person name="Oliver S.G."/>
            <person name="Panzeri L."/>
            <person name="Paoluzi S."/>
            <person name="Plevani P."/>
            <person name="Portetelle D."/>
            <person name="Portillo F."/>
            <person name="Potier S."/>
            <person name="Purnelle B."/>
            <person name="Rieger M."/>
            <person name="Riles L."/>
            <person name="Rinaldi T."/>
            <person name="Robben J."/>
            <person name="Rodrigues-Pousada C."/>
            <person name="Rodriguez-Belmonte E."/>
            <person name="Rodriguez-Torres A.M."/>
            <person name="Rose M."/>
            <person name="Ruzzi M."/>
            <person name="Saliola M."/>
            <person name="Sanchez-Perez M."/>
            <person name="Schaefer B."/>
            <person name="Schaefer M."/>
            <person name="Scharfe M."/>
            <person name="Schmidheini T."/>
            <person name="Schreer A."/>
            <person name="Skala J."/>
            <person name="Souciet J.-L."/>
            <person name="Steensma H.Y."/>
            <person name="Talla E."/>
            <person name="Thierry A."/>
            <person name="Vandenbol M."/>
            <person name="van der Aart Q.J.M."/>
            <person name="Van Dyck L."/>
            <person name="Vanoni M."/>
            <person name="Verhasselt P."/>
            <person name="Voet M."/>
            <person name="Volckaert G."/>
            <person name="Wambutt R."/>
            <person name="Watson M.D."/>
            <person name="Weber N."/>
            <person name="Wedler E."/>
            <person name="Wedler H."/>
            <person name="Wipfli P."/>
            <person name="Wolf K."/>
            <person name="Wright L.F."/>
            <person name="Zaccaria P."/>
            <person name="Zimmermann M."/>
            <person name="Zollner A."/>
            <person name="Kleine K."/>
        </authorList>
    </citation>
    <scope>NUCLEOTIDE SEQUENCE [LARGE SCALE GENOMIC DNA]</scope>
    <source>
        <strain>ATCC 204508 / S288c</strain>
    </source>
</reference>
<reference key="3">
    <citation type="journal article" date="2014" name="G3 (Bethesda)">
        <title>The reference genome sequence of Saccharomyces cerevisiae: Then and now.</title>
        <authorList>
            <person name="Engel S.R."/>
            <person name="Dietrich F.S."/>
            <person name="Fisk D.G."/>
            <person name="Binkley G."/>
            <person name="Balakrishnan R."/>
            <person name="Costanzo M.C."/>
            <person name="Dwight S.S."/>
            <person name="Hitz B.C."/>
            <person name="Karra K."/>
            <person name="Nash R.S."/>
            <person name="Weng S."/>
            <person name="Wong E.D."/>
            <person name="Lloyd P."/>
            <person name="Skrzypek M.S."/>
            <person name="Miyasato S.R."/>
            <person name="Simison M."/>
            <person name="Cherry J.M."/>
        </authorList>
    </citation>
    <scope>GENOME REANNOTATION</scope>
    <source>
        <strain>ATCC 204508 / S288c</strain>
    </source>
</reference>
<reference key="4">
    <citation type="journal article" date="2007" name="Genome Res.">
        <title>Approaching a complete repository of sequence-verified protein-encoding clones for Saccharomyces cerevisiae.</title>
        <authorList>
            <person name="Hu Y."/>
            <person name="Rolfs A."/>
            <person name="Bhullar B."/>
            <person name="Murthy T.V.S."/>
            <person name="Zhu C."/>
            <person name="Berger M.F."/>
            <person name="Camargo A.A."/>
            <person name="Kelley F."/>
            <person name="McCarron S."/>
            <person name="Jepson D."/>
            <person name="Richardson A."/>
            <person name="Raphael J."/>
            <person name="Moreira D."/>
            <person name="Taycher E."/>
            <person name="Zuo D."/>
            <person name="Mohr S."/>
            <person name="Kane M.F."/>
            <person name="Williamson J."/>
            <person name="Simpson A.J.G."/>
            <person name="Bulyk M.L."/>
            <person name="Harlow E."/>
            <person name="Marsischky G."/>
            <person name="Kolodner R.D."/>
            <person name="LaBaer J."/>
        </authorList>
    </citation>
    <scope>NUCLEOTIDE SEQUENCE [GENOMIC DNA]</scope>
    <source>
        <strain>ATCC 204508 / S288c</strain>
    </source>
</reference>
<reference key="5">
    <citation type="journal article" date="1998" name="J. Cell Biol.">
        <title>Saccharomyces cerevisiae Duo1p and Dam1p, novel proteins involved in mitotic spindle function.</title>
        <authorList>
            <person name="Hofmann C."/>
            <person name="Cheeseman I.M."/>
            <person name="Goode B.L."/>
            <person name="McDonald K.L."/>
            <person name="Barnes G."/>
            <person name="Drubin D.G."/>
        </authorList>
    </citation>
    <scope>FUNCTION</scope>
    <scope>SUBCELLULAR LOCATION</scope>
    <scope>MUTAGENESIS OF GLU-67; ALA-117; MET-124 AND ALA-157</scope>
</reference>
<reference key="6">
    <citation type="journal article" date="2002" name="Cell">
        <title>Phospho-regulation of kinetochore-microtubule attachments by the Aurora kinase Ipl1p.</title>
        <authorList>
            <person name="Cheeseman I.M."/>
            <person name="Anderson S."/>
            <person name="Jwa M."/>
            <person name="Green E.M."/>
            <person name="Kang J.-S."/>
            <person name="Yates J.R. III"/>
            <person name="Chan C.S.M."/>
            <person name="Drubin D.G."/>
            <person name="Barnes G."/>
        </authorList>
    </citation>
    <scope>FUNCTION</scope>
</reference>
<reference key="7">
    <citation type="journal article" date="2002" name="EMBO J.">
        <title>Four new subunits of the Dam1-Duo1 complex reveal novel functions in sister kinetochore biorientation.</title>
        <authorList>
            <person name="Janke C."/>
            <person name="Ortiz J."/>
            <person name="Tanaka T.U."/>
            <person name="Lechner J."/>
            <person name="Schiebel E."/>
        </authorList>
    </citation>
    <scope>IDENTIFICATION IN THE DASH COMPLEX</scope>
    <scope>IDENTIFICATION BY MASS SPECTROMETRY</scope>
    <scope>SUBCELLULAR LOCATION</scope>
</reference>
<reference key="8">
    <citation type="journal article" date="2003" name="Nature">
        <title>Global analysis of protein localization in budding yeast.</title>
        <authorList>
            <person name="Huh W.-K."/>
            <person name="Falvo J.V."/>
            <person name="Gerke L.C."/>
            <person name="Carroll A.S."/>
            <person name="Howson R.W."/>
            <person name="Weissman J.S."/>
            <person name="O'Shea E.K."/>
        </authorList>
    </citation>
    <scope>SUBCELLULAR LOCATION [LARGE SCALE ANALYSIS]</scope>
</reference>
<reference key="9">
    <citation type="journal article" date="2003" name="Nature">
        <title>Global analysis of protein expression in yeast.</title>
        <authorList>
            <person name="Ghaemmaghami S."/>
            <person name="Huh W.-K."/>
            <person name="Bower K."/>
            <person name="Howson R.W."/>
            <person name="Belle A."/>
            <person name="Dephoure N."/>
            <person name="O'Shea E.K."/>
            <person name="Weissman J.S."/>
        </authorList>
    </citation>
    <scope>LEVEL OF PROTEIN EXPRESSION [LARGE SCALE ANALYSIS]</scope>
</reference>
<reference key="10">
    <citation type="journal article" date="2005" name="Mol. Cell">
        <title>Formation of a dynamic kinetochore-microtubule interface through assembly of the Dam1 ring complex.</title>
        <authorList>
            <person name="Westermann S."/>
            <person name="Avila-Sakar A."/>
            <person name="Wang H.-W."/>
            <person name="Niederstrasser H."/>
            <person name="Wong J."/>
            <person name="Drubin D.G."/>
            <person name="Nogales E."/>
            <person name="Barnes G."/>
        </authorList>
    </citation>
    <scope>FUNCTION</scope>
</reference>
<reference key="11">
    <citation type="journal article" date="2006" name="Nature">
        <title>The Dam1 kinetochore ring complex moves processively on depolymerizing microtubule ends.</title>
        <authorList>
            <person name="Westermann S."/>
            <person name="Wang H.-W."/>
            <person name="Avila-Sakar A."/>
            <person name="Drubin D.G."/>
            <person name="Nogales E."/>
            <person name="Barnes G."/>
        </authorList>
    </citation>
    <scope>FUNCTION</scope>
</reference>
<reference key="12">
    <citation type="journal article" date="2006" name="Nat. Cell Biol.">
        <title>Molecular architecture of a kinetochore-microtubule attachment site.</title>
        <authorList>
            <person name="Joglekar A.P."/>
            <person name="Bouck D.C."/>
            <person name="Molk J.N."/>
            <person name="Bloom K.S."/>
            <person name="Salmon E.D."/>
        </authorList>
    </citation>
    <scope>IDENTIFICATION IN THE DASH COMPLEX</scope>
</reference>
<reference key="13">
    <citation type="journal article" date="2006" name="Proc. Natl. Acad. Sci. U.S.A.">
        <title>The Dam1 kinetochore complex harnesses microtubule dynamics to produce force and movement.</title>
        <authorList>
            <person name="Asbury C.L."/>
            <person name="Gestaut D.R."/>
            <person name="Powers A.F."/>
            <person name="Franck A.D."/>
            <person name="Davis T.N."/>
        </authorList>
    </citation>
    <scope>FUNCTION</scope>
</reference>
<reference key="14">
    <citation type="journal article" date="2007" name="Genes Dev.">
        <title>Kinetochore microtubule interaction during S phase in Saccharomyces cerevisiae.</title>
        <authorList>
            <person name="Kitamura E."/>
            <person name="Tanaka K."/>
            <person name="Kitamura Y."/>
            <person name="Tanaka T.U."/>
        </authorList>
    </citation>
    <scope>FUNCTION</scope>
</reference>
<reference key="15">
    <citation type="journal article" date="2007" name="Mol. Biol. Cell">
        <title>Protein arms in the kinetochore-microtubule interface of the yeast DASH complex.</title>
        <authorList>
            <person name="Miranda J.J."/>
            <person name="King D.S."/>
            <person name="Harrison S.C."/>
        </authorList>
    </citation>
    <scope>FUNCTION</scope>
    <scope>IDENTIFICATION IN THE DASH COMPLEX</scope>
</reference>
<reference key="16">
    <citation type="journal article" date="2012" name="Proc. Natl. Acad. Sci. U.S.A.">
        <title>N-terminal acetylome analyses and functional insights of the N-terminal acetyltransferase NatB.</title>
        <authorList>
            <person name="Van Damme P."/>
            <person name="Lasa M."/>
            <person name="Polevoda B."/>
            <person name="Gazquez C."/>
            <person name="Elosegui-Artola A."/>
            <person name="Kim D.S."/>
            <person name="De Juan-Pardo E."/>
            <person name="Demeyer K."/>
            <person name="Hole K."/>
            <person name="Larrea E."/>
            <person name="Timmerman E."/>
            <person name="Prieto J."/>
            <person name="Arnesen T."/>
            <person name="Sherman F."/>
            <person name="Gevaert K."/>
            <person name="Aldabe R."/>
        </authorList>
    </citation>
    <scope>ACETYLATION [LARGE SCALE ANALYSIS] AT SER-2</scope>
    <scope>CLEAVAGE OF INITIATOR METHIONINE [LARGE SCALE ANALYSIS]</scope>
    <scope>IDENTIFICATION BY MASS SPECTROMETRY [LARGE SCALE ANALYSIS]</scope>
</reference>
<reference key="17">
    <citation type="journal article" date="2014" name="Nat. Commun.">
        <title>Kinetochores require oligomerization of Dam1 complex to maintain microtubule attachments against tension and promote biorientation.</title>
        <authorList>
            <person name="Umbreit N.T."/>
            <person name="Miller M.P."/>
            <person name="Tien J.F."/>
            <person name="Ortola J.C."/>
            <person name="Gui L."/>
            <person name="Lee K.K."/>
            <person name="Biggins S."/>
            <person name="Asbury C.L."/>
            <person name="Davis T.N."/>
        </authorList>
    </citation>
    <scope>FUNCTION</scope>
    <scope>IDENTIFICATION IN THE DASH COMPLEX</scope>
    <scope>SUBUNIT</scope>
</reference>
<reference key="18">
    <citation type="journal article" date="2023" name="Cell Rep.">
        <title>Single-copy locus proteomics of early- and late-firing DNA replication origins identifies a role of Ask1/DASH complex in replication timing control.</title>
        <authorList>
            <person name="Weibeta M."/>
            <person name="Chanou A."/>
            <person name="Schauer T."/>
            <person name="Tvardovskiy A."/>
            <person name="Meiser S."/>
            <person name="Koenig A.C."/>
            <person name="Schmidt T."/>
            <person name="Kruse E."/>
            <person name="Ummethum H."/>
            <person name="Trauner M."/>
            <person name="Werner M."/>
            <person name="Lalonde M."/>
            <person name="Hauck S.M."/>
            <person name="Scialdone A."/>
            <person name="Hamperl S."/>
        </authorList>
    </citation>
    <scope>FUNCTION</scope>
</reference>
<reference key="19">
    <citation type="journal article" date="2005" name="Nat. Struct. Mol. Biol.">
        <title>The yeast DASH complex forms closed rings on microtubules.</title>
        <authorList>
            <person name="Miranda J.L."/>
            <person name="Wulf P.D."/>
            <person name="Sorger P.K."/>
            <person name="Harrison S.C."/>
        </authorList>
    </citation>
    <scope>ELECTRON MICROSCOPY OF DASH COMPLEX ALONE AND BOUND TO MICROTUBULES</scope>
    <scope>FUNCTION</scope>
    <scope>IDENTIFICATION IN THE DASH COMPLEX</scope>
</reference>
<reference key="20">
    <citation type="journal article" date="2007" name="Nat. Struct. Mol. Biol.">
        <title>Architecture of the Dam1 kinetochore ring complex and implications for microtubule-driven assembly and force-coupling mechanisms.</title>
        <authorList>
            <person name="Wang H.W."/>
            <person name="Ramey V.H."/>
            <person name="Westermann S."/>
            <person name="Leschziner A.E."/>
            <person name="Welburn J.P."/>
            <person name="Nakajima Y."/>
            <person name="Drubin D.G."/>
            <person name="Barnes G."/>
            <person name="Nogales E."/>
        </authorList>
    </citation>
    <scope>ELECTRON MICROSCOPY OF DASH COMPLEX</scope>
    <scope>FUNCTION</scope>
    <scope>IDENTIFICATION IN THE DASH COMPLEX</scope>
    <scope>SUBUNIT</scope>
</reference>
<protein>
    <recommendedName>
        <fullName>DASH complex subunit DUO1</fullName>
    </recommendedName>
    <alternativeName>
        <fullName>Death upon overproduction protein 1</fullName>
    </alternativeName>
    <alternativeName>
        <fullName>Outer kinetochore protein DUO1</fullName>
    </alternativeName>
</protein>
<name>DUO1_YEAST</name>
<evidence type="ECO:0000250" key="1">
    <source>
        <dbReference type="UniProtKB" id="O74372"/>
    </source>
</evidence>
<evidence type="ECO:0000255" key="2"/>
<evidence type="ECO:0000256" key="3">
    <source>
        <dbReference type="SAM" id="MobiDB-lite"/>
    </source>
</evidence>
<evidence type="ECO:0000269" key="4">
    <source>
    </source>
</evidence>
<evidence type="ECO:0000269" key="5">
    <source>
    </source>
</evidence>
<evidence type="ECO:0000269" key="6">
    <source>
    </source>
</evidence>
<evidence type="ECO:0000269" key="7">
    <source>
    </source>
</evidence>
<evidence type="ECO:0000269" key="8">
    <source>
    </source>
</evidence>
<evidence type="ECO:0000269" key="9">
    <source>
    </source>
</evidence>
<evidence type="ECO:0000269" key="10">
    <source>
    </source>
</evidence>
<evidence type="ECO:0000269" key="11">
    <source>
    </source>
</evidence>
<evidence type="ECO:0000269" key="12">
    <source>
    </source>
</evidence>
<evidence type="ECO:0000269" key="13">
    <source>
    </source>
</evidence>
<evidence type="ECO:0000269" key="14">
    <source>
    </source>
</evidence>
<evidence type="ECO:0000269" key="15">
    <source>
    </source>
</evidence>
<evidence type="ECO:0000269" key="16">
    <source>
    </source>
</evidence>
<evidence type="ECO:0000269" key="17">
    <source>
    </source>
</evidence>
<evidence type="ECO:0000269" key="18">
    <source>
    </source>
</evidence>
<evidence type="ECO:0000305" key="19"/>
<evidence type="ECO:0007744" key="20">
    <source>
    </source>
</evidence>